<name>KDSB_AQUAE</name>
<organism>
    <name type="scientific">Aquifex aeolicus (strain VF5)</name>
    <dbReference type="NCBI Taxonomy" id="224324"/>
    <lineage>
        <taxon>Bacteria</taxon>
        <taxon>Pseudomonadati</taxon>
        <taxon>Aquificota</taxon>
        <taxon>Aquificia</taxon>
        <taxon>Aquificales</taxon>
        <taxon>Aquificaceae</taxon>
        <taxon>Aquifex</taxon>
    </lineage>
</organism>
<proteinExistence type="evidence at protein level"/>
<protein>
    <recommendedName>
        <fullName evidence="1">3-deoxy-manno-octulosonate cytidylyltransferase</fullName>
        <ecNumber evidence="1">2.7.7.38</ecNumber>
    </recommendedName>
    <alternativeName>
        <fullName evidence="1">CMP-2-keto-3-deoxyoctulosonic acid synthase</fullName>
        <shortName evidence="1">CKS</shortName>
        <shortName evidence="1">CMP-KDO synthase</shortName>
    </alternativeName>
</protein>
<keyword id="KW-0002">3D-structure</keyword>
<keyword id="KW-0963">Cytoplasm</keyword>
<keyword id="KW-0448">Lipopolysaccharide biosynthesis</keyword>
<keyword id="KW-0548">Nucleotidyltransferase</keyword>
<keyword id="KW-1185">Reference proteome</keyword>
<keyword id="KW-0808">Transferase</keyword>
<accession>O66914</accession>
<sequence length="234" mass="27173">MRRAVIIPARLGSTRLKEKPLKNLLGKPLIRWVVEGLVKTGERVILATDSERVKEVVEDLCEVFLTPSDLPSGSDRVLYVVRDLDVDLIINYQGDEPFVYEEDIKLIFRELEKGERVVTLARKDKEAYERPEDVKVVLDREGYALYFSRSPIPYFRKNDTFYPLKHVGIYGFRKETLMEFGAMPPSKLEQIEGLEQLRLLENGIKIKVLITENYYHGVDTEEDLKIVEEKLKNL</sequence>
<feature type="chain" id="PRO_0000188496" description="3-deoxy-manno-octulosonate cytidylyltransferase">
    <location>
        <begin position="1"/>
        <end position="234"/>
    </location>
</feature>
<feature type="strand" evidence="2">
    <location>
        <begin position="3"/>
        <end position="8"/>
    </location>
</feature>
<feature type="turn" evidence="2">
    <location>
        <begin position="14"/>
        <end position="18"/>
    </location>
</feature>
<feature type="helix" evidence="2">
    <location>
        <begin position="19"/>
        <end position="21"/>
    </location>
</feature>
<feature type="helix" evidence="2">
    <location>
        <begin position="29"/>
        <end position="38"/>
    </location>
</feature>
<feature type="turn" evidence="2">
    <location>
        <begin position="39"/>
        <end position="41"/>
    </location>
</feature>
<feature type="strand" evidence="2">
    <location>
        <begin position="44"/>
        <end position="49"/>
    </location>
</feature>
<feature type="helix" evidence="2">
    <location>
        <begin position="51"/>
        <end position="57"/>
    </location>
</feature>
<feature type="turn" evidence="2">
    <location>
        <begin position="58"/>
        <end position="60"/>
    </location>
</feature>
<feature type="strand" evidence="2">
    <location>
        <begin position="61"/>
        <end position="65"/>
    </location>
</feature>
<feature type="helix" evidence="2">
    <location>
        <begin position="73"/>
        <end position="81"/>
    </location>
</feature>
<feature type="strand" evidence="2">
    <location>
        <begin position="87"/>
        <end position="91"/>
    </location>
</feature>
<feature type="helix" evidence="2">
    <location>
        <begin position="101"/>
        <end position="113"/>
    </location>
</feature>
<feature type="strand" evidence="2">
    <location>
        <begin position="116"/>
        <end position="123"/>
    </location>
</feature>
<feature type="helix" evidence="2">
    <location>
        <begin position="126"/>
        <end position="129"/>
    </location>
</feature>
<feature type="strand" evidence="2">
    <location>
        <begin position="135"/>
        <end position="138"/>
    </location>
</feature>
<feature type="strand" evidence="2">
    <location>
        <begin position="142"/>
        <end position="150"/>
    </location>
</feature>
<feature type="strand" evidence="2">
    <location>
        <begin position="164"/>
        <end position="173"/>
    </location>
</feature>
<feature type="helix" evidence="2">
    <location>
        <begin position="174"/>
        <end position="182"/>
    </location>
</feature>
<feature type="helix" evidence="2">
    <location>
        <begin position="187"/>
        <end position="192"/>
    </location>
</feature>
<feature type="helix" evidence="2">
    <location>
        <begin position="196"/>
        <end position="201"/>
    </location>
</feature>
<feature type="strand" evidence="2">
    <location>
        <begin position="207"/>
        <end position="210"/>
    </location>
</feature>
<feature type="helix" evidence="2">
    <location>
        <begin position="221"/>
        <end position="230"/>
    </location>
</feature>
<reference key="1">
    <citation type="journal article" date="1998" name="Nature">
        <title>The complete genome of the hyperthermophilic bacterium Aquifex aeolicus.</title>
        <authorList>
            <person name="Deckert G."/>
            <person name="Warren P.V."/>
            <person name="Gaasterland T."/>
            <person name="Young W.G."/>
            <person name="Lenox A.L."/>
            <person name="Graham D.E."/>
            <person name="Overbeek R."/>
            <person name="Snead M.A."/>
            <person name="Keller M."/>
            <person name="Aujay M."/>
            <person name="Huber R."/>
            <person name="Feldman R.A."/>
            <person name="Short J.M."/>
            <person name="Olsen G.J."/>
            <person name="Swanson R.V."/>
        </authorList>
    </citation>
    <scope>NUCLEOTIDE SEQUENCE [LARGE SCALE GENOMIC DNA]</scope>
    <source>
        <strain>VF5</strain>
    </source>
</reference>
<gene>
    <name evidence="1" type="primary">kdsB</name>
    <name type="ordered locus">aq_692</name>
</gene>
<comment type="function">
    <text evidence="1">Activates KDO (a required 8-carbon sugar) for incorporation into bacterial lipopolysaccharide in Gram-negative bacteria.</text>
</comment>
<comment type="catalytic activity">
    <reaction evidence="1">
        <text>3-deoxy-alpha-D-manno-oct-2-ulosonate + CTP = CMP-3-deoxy-beta-D-manno-octulosonate + diphosphate</text>
        <dbReference type="Rhea" id="RHEA:23448"/>
        <dbReference type="ChEBI" id="CHEBI:33019"/>
        <dbReference type="ChEBI" id="CHEBI:37563"/>
        <dbReference type="ChEBI" id="CHEBI:85986"/>
        <dbReference type="ChEBI" id="CHEBI:85987"/>
        <dbReference type="EC" id="2.7.7.38"/>
    </reaction>
</comment>
<comment type="pathway">
    <text evidence="1">Nucleotide-sugar biosynthesis; CMP-3-deoxy-D-manno-octulosonate biosynthesis; CMP-3-deoxy-D-manno-octulosonate from 3-deoxy-D-manno-octulosonate and CTP: step 1/1.</text>
</comment>
<comment type="pathway">
    <text evidence="1">Bacterial outer membrane biogenesis; lipopolysaccharide biosynthesis.</text>
</comment>
<comment type="subcellular location">
    <subcellularLocation>
        <location evidence="1">Cytoplasm</location>
    </subcellularLocation>
</comment>
<comment type="similarity">
    <text evidence="1">Belongs to the KdsB family.</text>
</comment>
<evidence type="ECO:0000255" key="1">
    <source>
        <dbReference type="HAMAP-Rule" id="MF_00057"/>
    </source>
</evidence>
<evidence type="ECO:0007829" key="2">
    <source>
        <dbReference type="PDB" id="2Y6P"/>
    </source>
</evidence>
<dbReference type="EC" id="2.7.7.38" evidence="1"/>
<dbReference type="EMBL" id="AE000657">
    <property type="protein sequence ID" value="AAC06870.1"/>
    <property type="molecule type" value="Genomic_DNA"/>
</dbReference>
<dbReference type="PIR" id="F70360">
    <property type="entry name" value="F70360"/>
</dbReference>
<dbReference type="RefSeq" id="NP_213474.1">
    <property type="nucleotide sequence ID" value="NC_000918.1"/>
</dbReference>
<dbReference type="RefSeq" id="WP_010880412.1">
    <property type="nucleotide sequence ID" value="NC_000918.1"/>
</dbReference>
<dbReference type="PDB" id="2Y6P">
    <property type="method" value="X-ray"/>
    <property type="resolution" value="2.10 A"/>
    <property type="chains" value="A/B/C=1-234"/>
</dbReference>
<dbReference type="PDBsum" id="2Y6P"/>
<dbReference type="SMR" id="O66914"/>
<dbReference type="FunCoup" id="O66914">
    <property type="interactions" value="364"/>
</dbReference>
<dbReference type="STRING" id="224324.aq_692"/>
<dbReference type="EnsemblBacteria" id="AAC06870">
    <property type="protein sequence ID" value="AAC06870"/>
    <property type="gene ID" value="aq_692"/>
</dbReference>
<dbReference type="KEGG" id="aae:aq_692"/>
<dbReference type="PATRIC" id="fig|224324.8.peg.556"/>
<dbReference type="eggNOG" id="COG1212">
    <property type="taxonomic scope" value="Bacteria"/>
</dbReference>
<dbReference type="HOGENOM" id="CLU_065038_0_1_0"/>
<dbReference type="InParanoid" id="O66914"/>
<dbReference type="OrthoDB" id="9815559at2"/>
<dbReference type="BRENDA" id="2.7.7.38">
    <property type="organism ID" value="396"/>
</dbReference>
<dbReference type="UniPathway" id="UPA00030"/>
<dbReference type="UniPathway" id="UPA00358">
    <property type="reaction ID" value="UER00476"/>
</dbReference>
<dbReference type="EvolutionaryTrace" id="O66914"/>
<dbReference type="Proteomes" id="UP000000798">
    <property type="component" value="Chromosome"/>
</dbReference>
<dbReference type="GO" id="GO:0005829">
    <property type="term" value="C:cytosol"/>
    <property type="evidence" value="ECO:0000318"/>
    <property type="project" value="GO_Central"/>
</dbReference>
<dbReference type="GO" id="GO:0008690">
    <property type="term" value="F:3-deoxy-manno-octulosonate cytidylyltransferase activity"/>
    <property type="evidence" value="ECO:0000318"/>
    <property type="project" value="GO_Central"/>
</dbReference>
<dbReference type="GO" id="GO:0033468">
    <property type="term" value="P:CMP-keto-3-deoxy-D-manno-octulosonic acid biosynthetic process"/>
    <property type="evidence" value="ECO:0007669"/>
    <property type="project" value="UniProtKB-UniRule"/>
</dbReference>
<dbReference type="GO" id="GO:0009103">
    <property type="term" value="P:lipopolysaccharide biosynthetic process"/>
    <property type="evidence" value="ECO:0007669"/>
    <property type="project" value="UniProtKB-UniRule"/>
</dbReference>
<dbReference type="CDD" id="cd02517">
    <property type="entry name" value="CMP-KDO-Synthetase"/>
    <property type="match status" value="1"/>
</dbReference>
<dbReference type="Gene3D" id="3.90.550.10">
    <property type="entry name" value="Spore Coat Polysaccharide Biosynthesis Protein SpsA, Chain A"/>
    <property type="match status" value="1"/>
</dbReference>
<dbReference type="HAMAP" id="MF_00057">
    <property type="entry name" value="KdsB"/>
    <property type="match status" value="1"/>
</dbReference>
<dbReference type="InterPro" id="IPR003329">
    <property type="entry name" value="Cytidylyl_trans"/>
</dbReference>
<dbReference type="InterPro" id="IPR004528">
    <property type="entry name" value="KdsB"/>
</dbReference>
<dbReference type="InterPro" id="IPR029044">
    <property type="entry name" value="Nucleotide-diphossugar_trans"/>
</dbReference>
<dbReference type="NCBIfam" id="TIGR00466">
    <property type="entry name" value="kdsB"/>
    <property type="match status" value="1"/>
</dbReference>
<dbReference type="NCBIfam" id="NF003952">
    <property type="entry name" value="PRK05450.1-5"/>
    <property type="match status" value="1"/>
</dbReference>
<dbReference type="PANTHER" id="PTHR42866">
    <property type="entry name" value="3-DEOXY-MANNO-OCTULOSONATE CYTIDYLYLTRANSFERASE"/>
    <property type="match status" value="1"/>
</dbReference>
<dbReference type="PANTHER" id="PTHR42866:SF2">
    <property type="entry name" value="3-DEOXY-MANNO-OCTULOSONATE CYTIDYLYLTRANSFERASE, MITOCHONDRIAL"/>
    <property type="match status" value="1"/>
</dbReference>
<dbReference type="Pfam" id="PF02348">
    <property type="entry name" value="CTP_transf_3"/>
    <property type="match status" value="1"/>
</dbReference>
<dbReference type="SUPFAM" id="SSF53448">
    <property type="entry name" value="Nucleotide-diphospho-sugar transferases"/>
    <property type="match status" value="1"/>
</dbReference>